<organism>
    <name type="scientific">Neurospora crassa (strain ATCC 24698 / 74-OR23-1A / CBS 708.71 / DSM 1257 / FGSC 987)</name>
    <dbReference type="NCBI Taxonomy" id="367110"/>
    <lineage>
        <taxon>Eukaryota</taxon>
        <taxon>Fungi</taxon>
        <taxon>Dikarya</taxon>
        <taxon>Ascomycota</taxon>
        <taxon>Pezizomycotina</taxon>
        <taxon>Sordariomycetes</taxon>
        <taxon>Sordariomycetidae</taxon>
        <taxon>Sordariales</taxon>
        <taxon>Sordariaceae</taxon>
        <taxon>Neurospora</taxon>
    </lineage>
</organism>
<reference key="1">
    <citation type="journal article" date="1982" name="EMBO J.">
        <title>The imported preprotein of the proteolipid subunit of the mitochondrial ATP synthase from Neurospora crassa. Molecular cloning and sequencing of the mRNA.</title>
        <authorList>
            <person name="Viebrock A."/>
            <person name="Perz A."/>
            <person name="Sebald W."/>
        </authorList>
    </citation>
    <scope>NUCLEOTIDE SEQUENCE [MRNA]</scope>
</reference>
<reference key="2">
    <citation type="journal article" date="2003" name="Nucleic Acids Res.">
        <title>What's in the genome of a filamentous fungus? Analysis of the Neurospora genome sequence.</title>
        <authorList>
            <person name="Mannhaupt G."/>
            <person name="Montrone C."/>
            <person name="Haase D."/>
            <person name="Mewes H.-W."/>
            <person name="Aign V."/>
            <person name="Hoheisel J.D."/>
            <person name="Fartmann B."/>
            <person name="Nyakatura G."/>
            <person name="Kempken F."/>
            <person name="Maier J."/>
            <person name="Schulte U."/>
        </authorList>
    </citation>
    <scope>NUCLEOTIDE SEQUENCE [LARGE SCALE GENOMIC DNA]</scope>
    <source>
        <strain>ATCC 24698 / 74-OR23-1A / CBS 708.71 / DSM 1257 / FGSC 987</strain>
    </source>
</reference>
<reference key="3">
    <citation type="journal article" date="2003" name="Nature">
        <title>The genome sequence of the filamentous fungus Neurospora crassa.</title>
        <authorList>
            <person name="Galagan J.E."/>
            <person name="Calvo S.E."/>
            <person name="Borkovich K.A."/>
            <person name="Selker E.U."/>
            <person name="Read N.D."/>
            <person name="Jaffe D.B."/>
            <person name="FitzHugh W."/>
            <person name="Ma L.-J."/>
            <person name="Smirnov S."/>
            <person name="Purcell S."/>
            <person name="Rehman B."/>
            <person name="Elkins T."/>
            <person name="Engels R."/>
            <person name="Wang S."/>
            <person name="Nielsen C.B."/>
            <person name="Butler J."/>
            <person name="Endrizzi M."/>
            <person name="Qui D."/>
            <person name="Ianakiev P."/>
            <person name="Bell-Pedersen D."/>
            <person name="Nelson M.A."/>
            <person name="Werner-Washburne M."/>
            <person name="Selitrennikoff C.P."/>
            <person name="Kinsey J.A."/>
            <person name="Braun E.L."/>
            <person name="Zelter A."/>
            <person name="Schulte U."/>
            <person name="Kothe G.O."/>
            <person name="Jedd G."/>
            <person name="Mewes H.-W."/>
            <person name="Staben C."/>
            <person name="Marcotte E."/>
            <person name="Greenberg D."/>
            <person name="Roy A."/>
            <person name="Foley K."/>
            <person name="Naylor J."/>
            <person name="Stange-Thomann N."/>
            <person name="Barrett R."/>
            <person name="Gnerre S."/>
            <person name="Kamal M."/>
            <person name="Kamvysselis M."/>
            <person name="Mauceli E.W."/>
            <person name="Bielke C."/>
            <person name="Rudd S."/>
            <person name="Frishman D."/>
            <person name="Krystofova S."/>
            <person name="Rasmussen C."/>
            <person name="Metzenberg R.L."/>
            <person name="Perkins D.D."/>
            <person name="Kroken S."/>
            <person name="Cogoni C."/>
            <person name="Macino G."/>
            <person name="Catcheside D.E.A."/>
            <person name="Li W."/>
            <person name="Pratt R.J."/>
            <person name="Osmani S.A."/>
            <person name="DeSouza C.P.C."/>
            <person name="Glass N.L."/>
            <person name="Orbach M.J."/>
            <person name="Berglund J.A."/>
            <person name="Voelker R."/>
            <person name="Yarden O."/>
            <person name="Plamann M."/>
            <person name="Seiler S."/>
            <person name="Dunlap J.C."/>
            <person name="Radford A."/>
            <person name="Aramayo R."/>
            <person name="Natvig D.O."/>
            <person name="Alex L.A."/>
            <person name="Mannhaupt G."/>
            <person name="Ebbole D.J."/>
            <person name="Freitag M."/>
            <person name="Paulsen I."/>
            <person name="Sachs M.S."/>
            <person name="Lander E.S."/>
            <person name="Nusbaum C."/>
            <person name="Birren B.W."/>
        </authorList>
    </citation>
    <scope>NUCLEOTIDE SEQUENCE [LARGE SCALE GENOMIC DNA]</scope>
    <source>
        <strain>ATCC 24698 / 74-OR23-1A / CBS 708.71 / DSM 1257 / FGSC 987</strain>
    </source>
</reference>
<reference key="4">
    <citation type="book" date="1979" name="Function and molecular aspects of biomembrane transport">
        <title>Amino acid sequence of the ATPase proteolipid from mitochondria, chloroplasts and bacteria (wild type and mutants).</title>
        <editorList>
            <person name="Quagliariello E."/>
            <person name="Palmieri F."/>
            <person name="Papa S."/>
            <person name="Klingenberg M."/>
        </editorList>
        <authorList>
            <person name="Sebald W."/>
            <person name="Hoppe J."/>
            <person name="Wachter E."/>
        </authorList>
    </citation>
    <scope>PROTEIN SEQUENCE OF 67-147</scope>
</reference>
<keyword id="KW-0138">CF(0)</keyword>
<keyword id="KW-0903">Direct protein sequencing</keyword>
<keyword id="KW-0375">Hydrogen ion transport</keyword>
<keyword id="KW-0406">Ion transport</keyword>
<keyword id="KW-0446">Lipid-binding</keyword>
<keyword id="KW-0472">Membrane</keyword>
<keyword id="KW-0496">Mitochondrion</keyword>
<keyword id="KW-1185">Reference proteome</keyword>
<keyword id="KW-0809">Transit peptide</keyword>
<keyword id="KW-0812">Transmembrane</keyword>
<keyword id="KW-1133">Transmembrane helix</keyword>
<keyword id="KW-0813">Transport</keyword>
<name>ATP9_NEUCR</name>
<sequence length="147" mass="15408">MASTRVLASRLASQMAASAKVARPAVRVAQVSKRTIQTGSPLQTLKRTQMTSIVNATTRQAFQKRAYSSEIAQAMVEVSKNLGMGSAAIGLTGAGIGIGLVFAALLNGVARNPALRGQLFSYAILGFAFVEAIGLFDLMVALMAKFT</sequence>
<proteinExistence type="evidence at protein level"/>
<protein>
    <recommendedName>
        <fullName>ATP synthase subunit 9, mitochondrial</fullName>
    </recommendedName>
    <alternativeName>
        <fullName>Lipid-binding protein</fullName>
    </alternativeName>
</protein>
<gene>
    <name type="primary">oli</name>
    <name type="synonym">atp-9</name>
    <name type="synonym">atp9</name>
    <name type="synonym">prl-1</name>
    <name type="ORF">B13D24.340</name>
    <name type="ORF">NCU02250</name>
</gene>
<dbReference type="EMBL" id="V00864">
    <property type="protein sequence ID" value="CAA24230.1"/>
    <property type="molecule type" value="mRNA"/>
</dbReference>
<dbReference type="EMBL" id="BX908789">
    <property type="protein sequence ID" value="CAF05899.1"/>
    <property type="molecule type" value="Genomic_DNA"/>
</dbReference>
<dbReference type="EMBL" id="CM002242">
    <property type="protein sequence ID" value="EAA30658.1"/>
    <property type="molecule type" value="Genomic_DNA"/>
</dbReference>
<dbReference type="PIR" id="S07173">
    <property type="entry name" value="LWNCA"/>
</dbReference>
<dbReference type="RefSeq" id="XP_959894.1">
    <property type="nucleotide sequence ID" value="XM_954801.3"/>
</dbReference>
<dbReference type="SMR" id="P00842"/>
<dbReference type="BioGRID" id="1977663">
    <property type="interactions" value="7"/>
</dbReference>
<dbReference type="IntAct" id="P00842">
    <property type="interactions" value="2"/>
</dbReference>
<dbReference type="MINT" id="P00842"/>
<dbReference type="STRING" id="367110.P00842"/>
<dbReference type="PaxDb" id="5141-EFNCRP00000003180"/>
<dbReference type="EnsemblFungi" id="EAA30658">
    <property type="protein sequence ID" value="EAA30658"/>
    <property type="gene ID" value="NCU02250"/>
</dbReference>
<dbReference type="GeneID" id="3876057"/>
<dbReference type="KEGG" id="ncr:NCU02250"/>
<dbReference type="VEuPathDB" id="FungiDB:NCU02250"/>
<dbReference type="HOGENOM" id="CLU_116822_0_0_1"/>
<dbReference type="InParanoid" id="P00842"/>
<dbReference type="OMA" id="MKRQTIQ"/>
<dbReference type="OrthoDB" id="438052at2759"/>
<dbReference type="Proteomes" id="UP000001805">
    <property type="component" value="Chromosome 7, Linkage Group VII"/>
</dbReference>
<dbReference type="GO" id="GO:0031966">
    <property type="term" value="C:mitochondrial membrane"/>
    <property type="evidence" value="ECO:0007669"/>
    <property type="project" value="UniProtKB-SubCell"/>
</dbReference>
<dbReference type="GO" id="GO:0045259">
    <property type="term" value="C:proton-transporting ATP synthase complex"/>
    <property type="evidence" value="ECO:0007669"/>
    <property type="project" value="UniProtKB-KW"/>
</dbReference>
<dbReference type="GO" id="GO:0033177">
    <property type="term" value="C:proton-transporting two-sector ATPase complex, proton-transporting domain"/>
    <property type="evidence" value="ECO:0007669"/>
    <property type="project" value="InterPro"/>
</dbReference>
<dbReference type="GO" id="GO:0008289">
    <property type="term" value="F:lipid binding"/>
    <property type="evidence" value="ECO:0007669"/>
    <property type="project" value="UniProtKB-KW"/>
</dbReference>
<dbReference type="GO" id="GO:0015078">
    <property type="term" value="F:proton transmembrane transporter activity"/>
    <property type="evidence" value="ECO:0007669"/>
    <property type="project" value="InterPro"/>
</dbReference>
<dbReference type="GO" id="GO:0015986">
    <property type="term" value="P:proton motive force-driven ATP synthesis"/>
    <property type="evidence" value="ECO:0000318"/>
    <property type="project" value="GO_Central"/>
</dbReference>
<dbReference type="CDD" id="cd18182">
    <property type="entry name" value="ATP-synt_Fo_c_ATP5G3"/>
    <property type="match status" value="1"/>
</dbReference>
<dbReference type="FunFam" id="1.20.20.10:FF:000006">
    <property type="entry name" value="ATP synthase subunit 9, mitochondrial"/>
    <property type="match status" value="1"/>
</dbReference>
<dbReference type="Gene3D" id="1.20.20.10">
    <property type="entry name" value="F1F0 ATP synthase subunit C"/>
    <property type="match status" value="1"/>
</dbReference>
<dbReference type="HAMAP" id="MF_01396">
    <property type="entry name" value="ATP_synth_c_bact"/>
    <property type="match status" value="1"/>
</dbReference>
<dbReference type="InterPro" id="IPR000454">
    <property type="entry name" value="ATP_synth_F0_csu"/>
</dbReference>
<dbReference type="InterPro" id="IPR020537">
    <property type="entry name" value="ATP_synth_F0_csu_DDCD_BS"/>
</dbReference>
<dbReference type="InterPro" id="IPR038662">
    <property type="entry name" value="ATP_synth_F0_csu_sf"/>
</dbReference>
<dbReference type="InterPro" id="IPR002379">
    <property type="entry name" value="ATPase_proteolipid_c-like_dom"/>
</dbReference>
<dbReference type="InterPro" id="IPR035921">
    <property type="entry name" value="F/V-ATP_Csub_sf"/>
</dbReference>
<dbReference type="PANTHER" id="PTHR10031">
    <property type="entry name" value="ATP SYNTHASE LIPID-BINDING PROTEIN, MITOCHONDRIAL"/>
    <property type="match status" value="1"/>
</dbReference>
<dbReference type="PANTHER" id="PTHR10031:SF13">
    <property type="entry name" value="ATP SYNTHASE SUBUNIT 9, MITOCHONDRIAL"/>
    <property type="match status" value="1"/>
</dbReference>
<dbReference type="Pfam" id="PF00137">
    <property type="entry name" value="ATP-synt_C"/>
    <property type="match status" value="1"/>
</dbReference>
<dbReference type="PRINTS" id="PR00124">
    <property type="entry name" value="ATPASEC"/>
</dbReference>
<dbReference type="SUPFAM" id="SSF81333">
    <property type="entry name" value="F1F0 ATP synthase subunit C"/>
    <property type="match status" value="1"/>
</dbReference>
<dbReference type="PROSITE" id="PS00605">
    <property type="entry name" value="ATPASE_C"/>
    <property type="match status" value="1"/>
</dbReference>
<evidence type="ECO:0000250" key="1"/>
<evidence type="ECO:0000255" key="2"/>
<evidence type="ECO:0000269" key="3">
    <source>
    </source>
</evidence>
<evidence type="ECO:0000269" key="4">
    <source ref="4"/>
</evidence>
<evidence type="ECO:0000305" key="5"/>
<accession>P00842</accession>
<accession>Q7S5B4</accession>
<comment type="function">
    <text>Mitochondrial membrane ATP synthase (F(1)F(0) ATP synthase or Complex V) produces ATP from ADP in the presence of a proton gradient across the membrane which is generated by electron transport complexes of the respiratory chain. F-type ATPases consist of two structural domains, F(1) - containing the extramembraneous catalytic core and F(0) - containing the membrane proton channel, linked together by a central stalk and a peripheral stalk. During catalysis, ATP synthesis in the catalytic domain of F(1) is coupled via a rotary mechanism of the central stalk subunits to proton translocation. Part of the complex F(0) domain. A homomeric c-ring of probably 10 subunits is part of the complex rotary element.</text>
</comment>
<comment type="subunit">
    <text>F-type ATPases have 2 components, CF(1) - the catalytic core - and CF(0) - the membrane proton channel. CF(1) has five subunits: alpha(3), beta(3), gamma(1), delta(1), epsilon(1). CF(0) has three main subunits: a, b and c.</text>
</comment>
<comment type="interaction">
    <interactant intactId="EBI-9084292">
        <id>P00842</id>
    </interactant>
    <interactant intactId="EBI-30302">
        <id>Q02776</id>
        <label>TIM50</label>
    </interactant>
    <organismsDiffer>true</organismsDiffer>
    <experiments>5</experiments>
</comment>
<comment type="subcellular location">
    <subcellularLocation>
        <location evidence="5">Mitochondrion membrane</location>
        <topology evidence="5">Multi-pass membrane protein</topology>
    </subcellularLocation>
</comment>
<comment type="similarity">
    <text evidence="5">Belongs to the ATPase C chain family.</text>
</comment>
<feature type="transit peptide" description="Mitochondrion" evidence="3 4">
    <location>
        <begin position="1"/>
        <end position="66"/>
    </location>
</feature>
<feature type="chain" id="PRO_0000002573" description="ATP synthase subunit 9, mitochondrial">
    <location>
        <begin position="67"/>
        <end position="147"/>
    </location>
</feature>
<feature type="transmembrane region" description="Helical" evidence="2">
    <location>
        <begin position="86"/>
        <end position="106"/>
    </location>
</feature>
<feature type="transmembrane region" description="Helical" evidence="2">
    <location>
        <begin position="123"/>
        <end position="143"/>
    </location>
</feature>
<feature type="site" description="Reversibly protonated during proton transport" evidence="1">
    <location>
        <position position="131"/>
    </location>
</feature>
<feature type="sequence variant" description="In oligomycin-resistant mutant.">
    <original>F</original>
    <variation>S</variation>
    <location>
        <position position="127"/>
    </location>
</feature>
<feature type="sequence variant" description="In oligomycin-resistant mutant.">
    <original>F</original>
    <variation>Y</variation>
    <location>
        <position position="127"/>
    </location>
</feature>
<feature type="sequence variant" description="In oligomycin-resistant mutant.">
    <original>F</original>
    <variation>Y</variation>
    <location>
        <position position="136"/>
    </location>
</feature>